<organism>
    <name type="scientific">Nitratidesulfovibrio vulgaris (strain DSM 19637 / Miyazaki F)</name>
    <name type="common">Desulfovibrio vulgaris</name>
    <dbReference type="NCBI Taxonomy" id="883"/>
    <lineage>
        <taxon>Bacteria</taxon>
        <taxon>Pseudomonadati</taxon>
        <taxon>Thermodesulfobacteriota</taxon>
        <taxon>Desulfovibrionia</taxon>
        <taxon>Desulfovibrionales</taxon>
        <taxon>Desulfovibrionaceae</taxon>
        <taxon>Nitratidesulfovibrio</taxon>
    </lineage>
</organism>
<reference key="1">
    <citation type="submission" date="2008-10" db="EMBL/GenBank/DDBJ databases">
        <title>Complete sequence of Desulfovibrio vulgaris str. 'Miyazaki F'.</title>
        <authorList>
            <person name="Lucas S."/>
            <person name="Copeland A."/>
            <person name="Lapidus A."/>
            <person name="Glavina del Rio T."/>
            <person name="Dalin E."/>
            <person name="Tice H."/>
            <person name="Bruce D."/>
            <person name="Goodwin L."/>
            <person name="Pitluck S."/>
            <person name="Sims D."/>
            <person name="Brettin T."/>
            <person name="Detter J.C."/>
            <person name="Han C."/>
            <person name="Larimer F."/>
            <person name="Land M."/>
            <person name="Hauser L."/>
            <person name="Kyrpides N."/>
            <person name="Mikhailova N."/>
            <person name="Hazen T.C."/>
            <person name="Richardson P."/>
        </authorList>
    </citation>
    <scope>NUCLEOTIDE SEQUENCE [LARGE SCALE GENOMIC DNA]</scope>
    <source>
        <strain>DSM 19637 / Miyazaki F</strain>
    </source>
</reference>
<proteinExistence type="inferred from homology"/>
<protein>
    <recommendedName>
        <fullName evidence="1">Large ribosomal subunit protein bL20</fullName>
    </recommendedName>
    <alternativeName>
        <fullName evidence="2">50S ribosomal protein L20</fullName>
    </alternativeName>
</protein>
<comment type="function">
    <text evidence="1">Binds directly to 23S ribosomal RNA and is necessary for the in vitro assembly process of the 50S ribosomal subunit. It is not involved in the protein synthesizing functions of that subunit.</text>
</comment>
<comment type="similarity">
    <text evidence="1">Belongs to the bacterial ribosomal protein bL20 family.</text>
</comment>
<feature type="chain" id="PRO_1000122307" description="Large ribosomal subunit protein bL20">
    <location>
        <begin position="1"/>
        <end position="117"/>
    </location>
</feature>
<dbReference type="EMBL" id="CP001197">
    <property type="protein sequence ID" value="ACL07936.1"/>
    <property type="molecule type" value="Genomic_DNA"/>
</dbReference>
<dbReference type="SMR" id="B8DPM9"/>
<dbReference type="STRING" id="883.DvMF_0981"/>
<dbReference type="KEGG" id="dvm:DvMF_0981"/>
<dbReference type="eggNOG" id="COG0292">
    <property type="taxonomic scope" value="Bacteria"/>
</dbReference>
<dbReference type="HOGENOM" id="CLU_123265_0_1_7"/>
<dbReference type="OrthoDB" id="9808966at2"/>
<dbReference type="GO" id="GO:1990904">
    <property type="term" value="C:ribonucleoprotein complex"/>
    <property type="evidence" value="ECO:0007669"/>
    <property type="project" value="UniProtKB-KW"/>
</dbReference>
<dbReference type="GO" id="GO:0005840">
    <property type="term" value="C:ribosome"/>
    <property type="evidence" value="ECO:0007669"/>
    <property type="project" value="UniProtKB-KW"/>
</dbReference>
<dbReference type="GO" id="GO:0019843">
    <property type="term" value="F:rRNA binding"/>
    <property type="evidence" value="ECO:0007669"/>
    <property type="project" value="UniProtKB-UniRule"/>
</dbReference>
<dbReference type="GO" id="GO:0003735">
    <property type="term" value="F:structural constituent of ribosome"/>
    <property type="evidence" value="ECO:0007669"/>
    <property type="project" value="InterPro"/>
</dbReference>
<dbReference type="GO" id="GO:0000027">
    <property type="term" value="P:ribosomal large subunit assembly"/>
    <property type="evidence" value="ECO:0007669"/>
    <property type="project" value="UniProtKB-UniRule"/>
</dbReference>
<dbReference type="GO" id="GO:0006412">
    <property type="term" value="P:translation"/>
    <property type="evidence" value="ECO:0007669"/>
    <property type="project" value="InterPro"/>
</dbReference>
<dbReference type="CDD" id="cd07026">
    <property type="entry name" value="Ribosomal_L20"/>
    <property type="match status" value="1"/>
</dbReference>
<dbReference type="FunFam" id="1.10.1900.20:FF:000001">
    <property type="entry name" value="50S ribosomal protein L20"/>
    <property type="match status" value="1"/>
</dbReference>
<dbReference type="Gene3D" id="6.10.160.10">
    <property type="match status" value="1"/>
</dbReference>
<dbReference type="Gene3D" id="1.10.1900.20">
    <property type="entry name" value="Ribosomal protein L20"/>
    <property type="match status" value="1"/>
</dbReference>
<dbReference type="HAMAP" id="MF_00382">
    <property type="entry name" value="Ribosomal_bL20"/>
    <property type="match status" value="1"/>
</dbReference>
<dbReference type="InterPro" id="IPR005813">
    <property type="entry name" value="Ribosomal_bL20"/>
</dbReference>
<dbReference type="InterPro" id="IPR049946">
    <property type="entry name" value="RIBOSOMAL_L20_CS"/>
</dbReference>
<dbReference type="InterPro" id="IPR035566">
    <property type="entry name" value="Ribosomal_protein_bL20_C"/>
</dbReference>
<dbReference type="NCBIfam" id="TIGR01032">
    <property type="entry name" value="rplT_bact"/>
    <property type="match status" value="1"/>
</dbReference>
<dbReference type="PANTHER" id="PTHR10986">
    <property type="entry name" value="39S RIBOSOMAL PROTEIN L20"/>
    <property type="match status" value="1"/>
</dbReference>
<dbReference type="Pfam" id="PF00453">
    <property type="entry name" value="Ribosomal_L20"/>
    <property type="match status" value="1"/>
</dbReference>
<dbReference type="PRINTS" id="PR00062">
    <property type="entry name" value="RIBOSOMALL20"/>
</dbReference>
<dbReference type="SUPFAM" id="SSF74731">
    <property type="entry name" value="Ribosomal protein L20"/>
    <property type="match status" value="1"/>
</dbReference>
<dbReference type="PROSITE" id="PS00937">
    <property type="entry name" value="RIBOSOMAL_L20"/>
    <property type="match status" value="1"/>
</dbReference>
<accession>B8DPM9</accession>
<gene>
    <name evidence="1" type="primary">rplT</name>
    <name type="ordered locus">DvMF_0981</name>
</gene>
<sequence length="117" mass="13632">MRVKRGLASHRRHKKYLDAAKGFRGGRSKLYRTAREAVERSWMYAFRDRKVKKREFRKLWILRINAGARMHGLSYSKFMHGLTLAGISLNRKVLADLAVREKEDFAKLAQLAASKLN</sequence>
<evidence type="ECO:0000255" key="1">
    <source>
        <dbReference type="HAMAP-Rule" id="MF_00382"/>
    </source>
</evidence>
<evidence type="ECO:0000305" key="2"/>
<name>RL20_NITV9</name>
<keyword id="KW-0687">Ribonucleoprotein</keyword>
<keyword id="KW-0689">Ribosomal protein</keyword>
<keyword id="KW-0694">RNA-binding</keyword>
<keyword id="KW-0699">rRNA-binding</keyword>